<name>BRIZ1_ARATH</name>
<comment type="function">
    <text evidence="5">RING-type ubiquitin E3 ligase required for seed germination and post-germination growth.</text>
</comment>
<comment type="catalytic activity">
    <reaction evidence="5">
        <text>S-ubiquitinyl-[E2 ubiquitin-conjugating enzyme]-L-cysteine + [acceptor protein]-L-lysine = [E2 ubiquitin-conjugating enzyme]-L-cysteine + N(6)-ubiquitinyl-[acceptor protein]-L-lysine.</text>
        <dbReference type="EC" id="2.3.2.27"/>
    </reaction>
</comment>
<comment type="pathway">
    <text evidence="5">Protein modification; protein ubiquitination.</text>
</comment>
<comment type="subunit">
    <text evidence="5">Component of the heteromeric E3 ligase complex made of BRIZ1 and BRIZ2 (PubMed:20810661). Forms heterooligomers with BRIZ2 via coiled-coil domains (PubMed:20810661).</text>
</comment>
<comment type="alternative products">
    <event type="alternative splicing"/>
    <isoform>
        <id>E5KGE0-1</id>
        <name>1</name>
        <sequence type="displayed"/>
    </isoform>
    <isoform>
        <id>E5KGE0-2</id>
        <name>2</name>
        <sequence type="described" ref="VSP_060129"/>
    </isoform>
</comment>
<comment type="disruption phenotype">
    <text evidence="5">Viable heterozygous plants seeds are slow to emerge from the seed coat; emerged embryos remains white with unexpanded cotyledons thus leading to growth-arrested seedlings.</text>
</comment>
<comment type="sequence caution" evidence="8">
    <conflict type="erroneous gene model prediction">
        <sequence resource="EMBL-CDS" id="AAB88642"/>
    </conflict>
</comment>
<accession>E5KGE0</accession>
<accession>O48524</accession>
<accession>Q8GWY2</accession>
<protein>
    <recommendedName>
        <fullName evidence="7">BRAP2 RING ZnF UBP domain-containing protein 1</fullName>
        <ecNumber evidence="5">2.3.2.27</ecNumber>
    </recommendedName>
</protein>
<sequence length="488" mass="55215">MFILRVHSVDSERPISVEEEESGFTYASKRAQPPLKLIQPSLKLTDRKGLIHLYRKSSHSSLPNPSSRSTTLFIVAVPNYLSSLDFIRFCDSRISQVSDILFIRNDGMEDRYSVLITFSDQSEADGFYNNLNGKKFAPSEAEVCHILYVMSVEHTEFDEVAAEAPTGFTELPTCPICLERLDPDTSGIVSTLCDHSFQCSCTSKWTYLSCQVCRLCQQQDEILNCSICGKTENVWACLVCGFVGCGRYKEGHSIRHWKETHHCYSLDLRTQQIWDYVGDSYVHRLNHSKIDGKSVEMSTSCLSHQGDCGLCECSEDTGISGAIFNSKVDSIVIEYNDLLASQLKGQRQYYESLIVEARSKQESSIAEAVEQIVVNTMQELQNKIEKCEEEKSGITEVNTKLIKEQDTWRKKAKEIEEREAALLGSKDEMITDLQEQIRDITVFIEAKKTLKKMSSDTDGIREGTVLPVPISPEPVSSVRRQKKSNRRK</sequence>
<reference key="1">
    <citation type="journal article" date="2010" name="J. Biol. Chem.">
        <title>BRIZ1 and BRIZ2 proteins form a heteromeric E3 ligase complex required for seed germination and post-germination growth in Arabidopsis thaliana.</title>
        <authorList>
            <person name="Hsia M.M."/>
            <person name="Callis J."/>
        </authorList>
    </citation>
    <scope>NUCLEOTIDE SEQUENCE [MRNA]</scope>
    <scope>FUNCTION</scope>
    <scope>DISRUPTION PHENOTYPE</scope>
    <scope>CATALYTIC ACTIVITY</scope>
    <scope>SUBUNIT</scope>
    <scope>PATHWAY</scope>
    <source>
        <strain>cv. Columbia</strain>
        <tissue>Seedling</tissue>
    </source>
</reference>
<reference key="2">
    <citation type="journal article" date="1999" name="Nature">
        <title>Sequence and analysis of chromosome 2 of the plant Arabidopsis thaliana.</title>
        <authorList>
            <person name="Lin X."/>
            <person name="Kaul S."/>
            <person name="Rounsley S.D."/>
            <person name="Shea T.P."/>
            <person name="Benito M.-I."/>
            <person name="Town C.D."/>
            <person name="Fujii C.Y."/>
            <person name="Mason T.M."/>
            <person name="Bowman C.L."/>
            <person name="Barnstead M.E."/>
            <person name="Feldblyum T.V."/>
            <person name="Buell C.R."/>
            <person name="Ketchum K.A."/>
            <person name="Lee J.J."/>
            <person name="Ronning C.M."/>
            <person name="Koo H.L."/>
            <person name="Moffat K.S."/>
            <person name="Cronin L.A."/>
            <person name="Shen M."/>
            <person name="Pai G."/>
            <person name="Van Aken S."/>
            <person name="Umayam L."/>
            <person name="Tallon L.J."/>
            <person name="Gill J.E."/>
            <person name="Adams M.D."/>
            <person name="Carrera A.J."/>
            <person name="Creasy T.H."/>
            <person name="Goodman H.M."/>
            <person name="Somerville C.R."/>
            <person name="Copenhaver G.P."/>
            <person name="Preuss D."/>
            <person name="Nierman W.C."/>
            <person name="White O."/>
            <person name="Eisen J.A."/>
            <person name="Salzberg S.L."/>
            <person name="Fraser C.M."/>
            <person name="Venter J.C."/>
        </authorList>
    </citation>
    <scope>NUCLEOTIDE SEQUENCE [LARGE SCALE GENOMIC DNA]</scope>
    <source>
        <strain>cv. Columbia</strain>
    </source>
</reference>
<reference key="3">
    <citation type="journal article" date="2017" name="Plant J.">
        <title>Araport11: a complete reannotation of the Arabidopsis thaliana reference genome.</title>
        <authorList>
            <person name="Cheng C.Y."/>
            <person name="Krishnakumar V."/>
            <person name="Chan A.P."/>
            <person name="Thibaud-Nissen F."/>
            <person name="Schobel S."/>
            <person name="Town C.D."/>
        </authorList>
    </citation>
    <scope>GENOME REANNOTATION</scope>
    <source>
        <strain>cv. Columbia</strain>
    </source>
</reference>
<reference key="4">
    <citation type="journal article" date="2002" name="Science">
        <title>Functional annotation of a full-length Arabidopsis cDNA collection.</title>
        <authorList>
            <person name="Seki M."/>
            <person name="Narusaka M."/>
            <person name="Kamiya A."/>
            <person name="Ishida J."/>
            <person name="Satou M."/>
            <person name="Sakurai T."/>
            <person name="Nakajima M."/>
            <person name="Enju A."/>
            <person name="Akiyama K."/>
            <person name="Oono Y."/>
            <person name="Muramatsu M."/>
            <person name="Hayashizaki Y."/>
            <person name="Kawai J."/>
            <person name="Carninci P."/>
            <person name="Itoh M."/>
            <person name="Ishii Y."/>
            <person name="Arakawa T."/>
            <person name="Shibata K."/>
            <person name="Shinagawa A."/>
            <person name="Shinozaki K."/>
        </authorList>
    </citation>
    <scope>NUCLEOTIDE SEQUENCE [LARGE SCALE MRNA] (ISOFORM 2)</scope>
    <source>
        <strain>cv. Columbia</strain>
    </source>
</reference>
<reference key="5">
    <citation type="journal article" date="2003" name="Science">
        <title>Empirical analysis of transcriptional activity in the Arabidopsis genome.</title>
        <authorList>
            <person name="Yamada K."/>
            <person name="Lim J."/>
            <person name="Dale J.M."/>
            <person name="Chen H."/>
            <person name="Shinn P."/>
            <person name="Palm C.J."/>
            <person name="Southwick A.M."/>
            <person name="Wu H.C."/>
            <person name="Kim C.J."/>
            <person name="Nguyen M."/>
            <person name="Pham P.K."/>
            <person name="Cheuk R.F."/>
            <person name="Karlin-Newmann G."/>
            <person name="Liu S.X."/>
            <person name="Lam B."/>
            <person name="Sakano H."/>
            <person name="Wu T."/>
            <person name="Yu G."/>
            <person name="Miranda M."/>
            <person name="Quach H.L."/>
            <person name="Tripp M."/>
            <person name="Chang C.H."/>
            <person name="Lee J.M."/>
            <person name="Toriumi M.J."/>
            <person name="Chan M.M."/>
            <person name="Tang C.C."/>
            <person name="Onodera C.S."/>
            <person name="Deng J.M."/>
            <person name="Akiyama K."/>
            <person name="Ansari Y."/>
            <person name="Arakawa T."/>
            <person name="Banh J."/>
            <person name="Banno F."/>
            <person name="Bowser L."/>
            <person name="Brooks S.Y."/>
            <person name="Carninci P."/>
            <person name="Chao Q."/>
            <person name="Choy N."/>
            <person name="Enju A."/>
            <person name="Goldsmith A.D."/>
            <person name="Gurjal M."/>
            <person name="Hansen N.F."/>
            <person name="Hayashizaki Y."/>
            <person name="Johnson-Hopson C."/>
            <person name="Hsuan V.W."/>
            <person name="Iida K."/>
            <person name="Karnes M."/>
            <person name="Khan S."/>
            <person name="Koesema E."/>
            <person name="Ishida J."/>
            <person name="Jiang P.X."/>
            <person name="Jones T."/>
            <person name="Kawai J."/>
            <person name="Kamiya A."/>
            <person name="Meyers C."/>
            <person name="Nakajima M."/>
            <person name="Narusaka M."/>
            <person name="Seki M."/>
            <person name="Sakurai T."/>
            <person name="Satou M."/>
            <person name="Tamse R."/>
            <person name="Vaysberg M."/>
            <person name="Wallender E.K."/>
            <person name="Wong C."/>
            <person name="Yamamura Y."/>
            <person name="Yuan S."/>
            <person name="Shinozaki K."/>
            <person name="Davis R.W."/>
            <person name="Theologis A."/>
            <person name="Ecker J.R."/>
        </authorList>
    </citation>
    <scope>NUCLEOTIDE SEQUENCE [LARGE SCALE MRNA]</scope>
    <source>
        <strain>cv. Columbia</strain>
    </source>
</reference>
<reference key="6">
    <citation type="journal article" date="2005" name="Plant Physiol.">
        <title>Functional analysis of the RING-type ubiquitin ligase family of Arabidopsis.</title>
        <authorList>
            <person name="Stone S.L."/>
            <person name="Hauksdottir H."/>
            <person name="Troy A."/>
            <person name="Herschleb J."/>
            <person name="Kraft E."/>
            <person name="Callis J."/>
        </authorList>
    </citation>
    <scope>GENE FAMILY</scope>
</reference>
<organism>
    <name type="scientific">Arabidopsis thaliana</name>
    <name type="common">Mouse-ear cress</name>
    <dbReference type="NCBI Taxonomy" id="3702"/>
    <lineage>
        <taxon>Eukaryota</taxon>
        <taxon>Viridiplantae</taxon>
        <taxon>Streptophyta</taxon>
        <taxon>Embryophyta</taxon>
        <taxon>Tracheophyta</taxon>
        <taxon>Spermatophyta</taxon>
        <taxon>Magnoliopsida</taxon>
        <taxon>eudicotyledons</taxon>
        <taxon>Gunneridae</taxon>
        <taxon>Pentapetalae</taxon>
        <taxon>rosids</taxon>
        <taxon>malvids</taxon>
        <taxon>Brassicales</taxon>
        <taxon>Brassicaceae</taxon>
        <taxon>Camelineae</taxon>
        <taxon>Arabidopsis</taxon>
    </lineage>
</organism>
<dbReference type="EC" id="2.3.2.27" evidence="5"/>
<dbReference type="EMBL" id="HQ127733">
    <property type="protein sequence ID" value="ADQ57814.1"/>
    <property type="molecule type" value="mRNA"/>
</dbReference>
<dbReference type="EMBL" id="AC002561">
    <property type="protein sequence ID" value="AAB88642.1"/>
    <property type="status" value="ALT_SEQ"/>
    <property type="molecule type" value="Genomic_DNA"/>
</dbReference>
<dbReference type="EMBL" id="CP002685">
    <property type="protein sequence ID" value="AEC10081.1"/>
    <property type="molecule type" value="Genomic_DNA"/>
</dbReference>
<dbReference type="EMBL" id="AK118562">
    <property type="protein sequence ID" value="BAC43163.1"/>
    <property type="molecule type" value="mRNA"/>
</dbReference>
<dbReference type="EMBL" id="BT004716">
    <property type="protein sequence ID" value="AAO42962.1"/>
    <property type="molecule type" value="mRNA"/>
</dbReference>
<dbReference type="PIR" id="T00926">
    <property type="entry name" value="T00926"/>
</dbReference>
<dbReference type="RefSeq" id="NP_181746.2">
    <molecule id="E5KGE0-1"/>
    <property type="nucleotide sequence ID" value="NM_129779.4"/>
</dbReference>
<dbReference type="SMR" id="E5KGE0"/>
<dbReference type="FunCoup" id="E5KGE0">
    <property type="interactions" value="4255"/>
</dbReference>
<dbReference type="STRING" id="3702.E5KGE0"/>
<dbReference type="iPTMnet" id="E5KGE0"/>
<dbReference type="PaxDb" id="3702-AT2G42160.1"/>
<dbReference type="ProteomicsDB" id="191336">
    <molecule id="E5KGE0-1"/>
</dbReference>
<dbReference type="EnsemblPlants" id="AT2G42160.1">
    <molecule id="E5KGE0-1"/>
    <property type="protein sequence ID" value="AT2G42160.1"/>
    <property type="gene ID" value="AT2G42160"/>
</dbReference>
<dbReference type="GeneID" id="818816"/>
<dbReference type="Gramene" id="AT2G42160.1">
    <molecule id="E5KGE0-1"/>
    <property type="protein sequence ID" value="AT2G42160.1"/>
    <property type="gene ID" value="AT2G42160"/>
</dbReference>
<dbReference type="KEGG" id="ath:AT2G42160"/>
<dbReference type="Araport" id="AT2G42160"/>
<dbReference type="TAIR" id="AT2G42160">
    <property type="gene designation" value="BRIZ1"/>
</dbReference>
<dbReference type="eggNOG" id="KOG0804">
    <property type="taxonomic scope" value="Eukaryota"/>
</dbReference>
<dbReference type="HOGENOM" id="CLU_009969_1_0_1"/>
<dbReference type="InParanoid" id="E5KGE0"/>
<dbReference type="OMA" id="YIEHASD"/>
<dbReference type="UniPathway" id="UPA00143"/>
<dbReference type="PRO" id="PR:E5KGE0"/>
<dbReference type="Proteomes" id="UP000006548">
    <property type="component" value="Chromosome 2"/>
</dbReference>
<dbReference type="ExpressionAtlas" id="E5KGE0">
    <property type="expression patterns" value="baseline and differential"/>
</dbReference>
<dbReference type="GO" id="GO:0000151">
    <property type="term" value="C:ubiquitin ligase complex"/>
    <property type="evidence" value="ECO:0000305"/>
    <property type="project" value="TAIR"/>
</dbReference>
<dbReference type="GO" id="GO:0016787">
    <property type="term" value="F:hydrolase activity"/>
    <property type="evidence" value="ECO:0007669"/>
    <property type="project" value="UniProtKB-KW"/>
</dbReference>
<dbReference type="GO" id="GO:0046982">
    <property type="term" value="F:protein heterodimerization activity"/>
    <property type="evidence" value="ECO:0000314"/>
    <property type="project" value="TAIR"/>
</dbReference>
<dbReference type="GO" id="GO:0004842">
    <property type="term" value="F:ubiquitin-protein transferase activity"/>
    <property type="evidence" value="ECO:0000314"/>
    <property type="project" value="TAIR"/>
</dbReference>
<dbReference type="GO" id="GO:0008270">
    <property type="term" value="F:zinc ion binding"/>
    <property type="evidence" value="ECO:0007669"/>
    <property type="project" value="UniProtKB-KW"/>
</dbReference>
<dbReference type="GO" id="GO:0016567">
    <property type="term" value="P:protein ubiquitination"/>
    <property type="evidence" value="ECO:0007669"/>
    <property type="project" value="UniProtKB-UniPathway"/>
</dbReference>
<dbReference type="GO" id="GO:0010029">
    <property type="term" value="P:regulation of seed germination"/>
    <property type="evidence" value="ECO:0000315"/>
    <property type="project" value="TAIR"/>
</dbReference>
<dbReference type="CDD" id="cd16457">
    <property type="entry name" value="RING-H2_BRAP2"/>
    <property type="match status" value="1"/>
</dbReference>
<dbReference type="CDD" id="cd12437">
    <property type="entry name" value="RRM_BRAP2_like"/>
    <property type="match status" value="1"/>
</dbReference>
<dbReference type="FunFam" id="3.30.40.10:FF:000555">
    <property type="entry name" value="Zinc finger (Ubiquitin-hydrolase) domain-containing protein"/>
    <property type="match status" value="1"/>
</dbReference>
<dbReference type="Gene3D" id="3.30.40.10">
    <property type="entry name" value="Zinc/RING finger domain, C3HC4 (zinc finger)"/>
    <property type="match status" value="1"/>
</dbReference>
<dbReference type="InterPro" id="IPR011422">
    <property type="entry name" value="BRAP2/ETP1_RRM"/>
</dbReference>
<dbReference type="InterPro" id="IPR047243">
    <property type="entry name" value="RING-H2_BRAP2"/>
</dbReference>
<dbReference type="InterPro" id="IPR001841">
    <property type="entry name" value="Znf_RING"/>
</dbReference>
<dbReference type="InterPro" id="IPR013083">
    <property type="entry name" value="Znf_RING/FYVE/PHD"/>
</dbReference>
<dbReference type="InterPro" id="IPR001607">
    <property type="entry name" value="Znf_UBP"/>
</dbReference>
<dbReference type="PANTHER" id="PTHR24007:SF10">
    <property type="entry name" value="BRAP2 RING ZNF UBP DOMAIN-CONTAINING PROTEIN 1"/>
    <property type="match status" value="1"/>
</dbReference>
<dbReference type="PANTHER" id="PTHR24007">
    <property type="entry name" value="BRCA1-ASSOCIATED PROTEIN"/>
    <property type="match status" value="1"/>
</dbReference>
<dbReference type="Pfam" id="PF07576">
    <property type="entry name" value="BRAP2"/>
    <property type="match status" value="1"/>
</dbReference>
<dbReference type="Pfam" id="PF02148">
    <property type="entry name" value="zf-UBP"/>
    <property type="match status" value="1"/>
</dbReference>
<dbReference type="SMART" id="SM00290">
    <property type="entry name" value="ZnF_UBP"/>
    <property type="match status" value="1"/>
</dbReference>
<dbReference type="SUPFAM" id="SSF57850">
    <property type="entry name" value="RING/U-box"/>
    <property type="match status" value="1"/>
</dbReference>
<dbReference type="PROSITE" id="PS50089">
    <property type="entry name" value="ZF_RING_2"/>
    <property type="match status" value="1"/>
</dbReference>
<dbReference type="PROSITE" id="PS50271">
    <property type="entry name" value="ZF_UBP"/>
    <property type="match status" value="1"/>
</dbReference>
<keyword id="KW-0025">Alternative splicing</keyword>
<keyword id="KW-0175">Coiled coil</keyword>
<keyword id="KW-0378">Hydrolase</keyword>
<keyword id="KW-0479">Metal-binding</keyword>
<keyword id="KW-1185">Reference proteome</keyword>
<keyword id="KW-0808">Transferase</keyword>
<keyword id="KW-0833">Ubl conjugation pathway</keyword>
<keyword id="KW-0862">Zinc</keyword>
<keyword id="KW-0863">Zinc-finger</keyword>
<proteinExistence type="evidence at protein level"/>
<gene>
    <name evidence="7" type="primary">BRIZ1</name>
    <name evidence="6" type="synonym">RING-HCa</name>
    <name evidence="9" type="ordered locus">At2g42160</name>
    <name evidence="10" type="ORF">T24P15.7</name>
</gene>
<feature type="chain" id="PRO_0000447000" description="BRAP2 RING ZnF UBP domain-containing protein 1">
    <location>
        <begin position="1"/>
        <end position="488"/>
    </location>
</feature>
<feature type="zinc finger region" description="RING-type; degenerate" evidence="2">
    <location>
        <begin position="174"/>
        <end position="214"/>
    </location>
</feature>
<feature type="zinc finger region" description="UBP-type; degenerate" evidence="3">
    <location>
        <begin position="208"/>
        <end position="301"/>
    </location>
</feature>
<feature type="region of interest" description="Disordered" evidence="4">
    <location>
        <begin position="453"/>
        <end position="488"/>
    </location>
</feature>
<feature type="coiled-coil region" evidence="1">
    <location>
        <begin position="370"/>
        <end position="418"/>
    </location>
</feature>
<feature type="compositionally biased region" description="Low complexity" evidence="4">
    <location>
        <begin position="465"/>
        <end position="478"/>
    </location>
</feature>
<feature type="compositionally biased region" description="Basic residues" evidence="4">
    <location>
        <begin position="479"/>
        <end position="488"/>
    </location>
</feature>
<feature type="binding site" evidence="3">
    <location>
        <position position="225"/>
    </location>
    <ligand>
        <name>Zn(2+)</name>
        <dbReference type="ChEBI" id="CHEBI:29105"/>
        <label>1</label>
    </ligand>
</feature>
<feature type="binding site" evidence="3">
    <location>
        <position position="228"/>
    </location>
    <ligand>
        <name>Zn(2+)</name>
        <dbReference type="ChEBI" id="CHEBI:29105"/>
        <label>1</label>
    </ligand>
</feature>
<feature type="binding site" evidence="3">
    <location>
        <position position="237"/>
    </location>
    <ligand>
        <name>Zn(2+)</name>
        <dbReference type="ChEBI" id="CHEBI:29105"/>
        <label>2</label>
    </ligand>
</feature>
<feature type="binding site" evidence="3">
    <location>
        <position position="240"/>
    </location>
    <ligand>
        <name>Zn(2+)</name>
        <dbReference type="ChEBI" id="CHEBI:29105"/>
        <label>2</label>
    </ligand>
</feature>
<feature type="binding site" evidence="3">
    <location>
        <position position="245"/>
    </location>
    <ligand>
        <name>Zn(2+)</name>
        <dbReference type="ChEBI" id="CHEBI:29105"/>
        <label>1</label>
    </ligand>
</feature>
<feature type="binding site" evidence="3">
    <location>
        <position position="252"/>
    </location>
    <ligand>
        <name>Zn(2+)</name>
        <dbReference type="ChEBI" id="CHEBI:29105"/>
        <label>1</label>
    </ligand>
</feature>
<feature type="binding site" evidence="3">
    <location>
        <position position="256"/>
    </location>
    <ligand>
        <name>Zn(2+)</name>
        <dbReference type="ChEBI" id="CHEBI:29105"/>
        <label>2</label>
    </ligand>
</feature>
<feature type="binding site" evidence="3">
    <location>
        <position position="262"/>
    </location>
    <ligand>
        <name>Zn(2+)</name>
        <dbReference type="ChEBI" id="CHEBI:29105"/>
        <label>2</label>
    </ligand>
</feature>
<feature type="splice variant" id="VSP_060129" description="In isoform 2.">
    <location>
        <begin position="1"/>
        <end position="376"/>
    </location>
</feature>
<feature type="sequence conflict" description="In Ref. 4; BAC43163 and 5; AAO42962." evidence="8" ref="4 5">
    <original>E</original>
    <variation>G</variation>
    <location>
        <position position="396"/>
    </location>
</feature>
<evidence type="ECO:0000255" key="1"/>
<evidence type="ECO:0000255" key="2">
    <source>
        <dbReference type="PROSITE-ProRule" id="PRU00175"/>
    </source>
</evidence>
<evidence type="ECO:0000255" key="3">
    <source>
        <dbReference type="PROSITE-ProRule" id="PRU00502"/>
    </source>
</evidence>
<evidence type="ECO:0000256" key="4">
    <source>
        <dbReference type="SAM" id="MobiDB-lite"/>
    </source>
</evidence>
<evidence type="ECO:0000269" key="5">
    <source>
    </source>
</evidence>
<evidence type="ECO:0000303" key="6">
    <source>
    </source>
</evidence>
<evidence type="ECO:0000303" key="7">
    <source>
    </source>
</evidence>
<evidence type="ECO:0000305" key="8"/>
<evidence type="ECO:0000312" key="9">
    <source>
        <dbReference type="Araport" id="AT2G42160"/>
    </source>
</evidence>
<evidence type="ECO:0000312" key="10">
    <source>
        <dbReference type="EMBL" id="AAB88642.1"/>
    </source>
</evidence>